<keyword id="KW-0539">Nucleus</keyword>
<keyword id="KW-1185">Reference proteome</keyword>
<keyword id="KW-0677">Repeat</keyword>
<keyword id="KW-0802">TPR repeat</keyword>
<keyword id="KW-0804">Transcription</keyword>
<keyword id="KW-0805">Transcription regulation</keyword>
<comment type="function">
    <text evidence="2">Component of the PAF1 complex (PAF1C) which has multiple functions during transcription by RNA polymerase II (By similarity). PAF1C associates with RNA polymerase II, is involved in transcriptional elongation and in histone modifications including methylation on histone H3 'Lys-4' (H3K4me3) (By similarity).</text>
</comment>
<comment type="subunit">
    <text evidence="1 2">Component of the PAF1 complex, which at least consists of cdc73, paf1, leo1, ctr9 and rtf1 (By similarity). The PAF1 complex interacts with PHF5A (By similarity).</text>
</comment>
<comment type="subcellular location">
    <subcellularLocation>
        <location evidence="1">Nucleus speckle</location>
    </subcellularLocation>
</comment>
<evidence type="ECO:0000250" key="1">
    <source>
        <dbReference type="UniProtKB" id="Q62018"/>
    </source>
</evidence>
<evidence type="ECO:0000250" key="2">
    <source>
        <dbReference type="UniProtKB" id="Q6PD62"/>
    </source>
</evidence>
<evidence type="ECO:0000256" key="3">
    <source>
        <dbReference type="SAM" id="MobiDB-lite"/>
    </source>
</evidence>
<evidence type="ECO:0000305" key="4"/>
<sequence>MSRGSIEIPLRDTDEVIELDFDQLPEGDEVISILKQEHTQLHIWIALALEYFKQGKTEDFVKLLEAARIDGNLDYRDHEKDQMTCLDTLAAYYVQQARKEKNKDNKKELITQATLLYTMADKIIMYDQNHLLGRACFCLLEGDKMDQADAQFHFVLNQSPNNIPALLGKACISFNKKDYRGALAYYKKALRTNPGCPAGVRLGMGHCFVKLNKLDKARLAFGRALDLNPTCVGALVGLAVLELNNKEADSIKNGVQLLSKAYTIDPSNPMVLNHLANHFFFKKDYSKVQHLALHAFHNTEVEAMQAESCYQLARSFHVQEDYDQAFQYYYQATQFAAASFVLPFFGLGQMYIYRGDKENASQCFEKVLKAYPNNYETMKILGSLYAASDDQEKRDIAKSHLKKVTEQYPDDVEAWIELAQILEQTDIQNALSAYGTATRILQEKVQADVPPEILNNVGALHFRLGNLGEAKKYFLASLDRAKAEAEHDEHYYNSISVTTSYNLARLYEGLCEFHESEKLYKNILREHPNYVDCYLRLGAMARDKGNFYEASDWFKEALQINQDHPDAWSLIGNLHLAKQEWGPGQKKFERILKQPSTQNDTYSMLALGNVWLQTLHQPTRDREKEKRHQDRALAIYKQVLRNDSKNLFAANGIGAVLAHKGYVREARDVFAQVREATADISDVWLNLAHIYVEQKQYISAVQMYENCLRKFYKHQNTEVLLYLARALFKCGKLQECKQILLKARHVAPNDTVLMFNVALVLQRLATLVLKDEKSNLKAVLNAVKELELAHRYFNYLSKVGDKMRFDLALATSEARQCSDLLSQAQYHVARARKQDEEEKEMRTKQEQEKEVLRQKLLKEQEEKHLREIEEQKKLLEQRAQYLEKTRNLLSFTGEMETPKEKKQRGGGGRRSKKNGEFEEFVNDDSDEELAPRKKKRKKGGSSSGEQGEGGDEGEGGEKKKKKRRKRPQKAAGSDDDEEQTPQSKKRQPKKKEKPAKLERTPPSMKGKIKSKAIISSSEDDSDEDKLKIADEGHARDSDSDDGPRKSQKRVISDSDSDNGNKSGSDAGSPQKSQRSDEDSDNAFARKRRRQISGSDNDSAQSRRSSGGSDNESRAASNSAESERGSDRGSDNEGSERASGNQSEQEVEKSERGSDESD</sequence>
<reference key="1">
    <citation type="submission" date="2005-06" db="EMBL/GenBank/DDBJ databases">
        <authorList>
            <consortium name="NIH - Xenopus Gene Collection (XGC) project"/>
        </authorList>
    </citation>
    <scope>NUCLEOTIDE SEQUENCE [LARGE SCALE MRNA]</scope>
    <source>
        <tissue>Embryo</tissue>
    </source>
</reference>
<gene>
    <name type="primary">ctr9</name>
    <name type="synonym">sh2bp1</name>
</gene>
<protein>
    <recommendedName>
        <fullName>RNA polymerase-associated protein CTR9 homolog</fullName>
    </recommendedName>
    <alternativeName>
        <fullName>SH2 domain-binding protein 1</fullName>
    </alternativeName>
</protein>
<name>CTR9_XENLA</name>
<feature type="chain" id="PRO_0000231590" description="RNA polymerase-associated protein CTR9 homolog">
    <location>
        <begin position="1"/>
        <end position="1157"/>
    </location>
</feature>
<feature type="repeat" description="TPR 1">
    <location>
        <begin position="41"/>
        <end position="75"/>
    </location>
</feature>
<feature type="repeat" description="TPR 2">
    <location>
        <begin position="129"/>
        <end position="162"/>
    </location>
</feature>
<feature type="repeat" description="TPR 3">
    <location>
        <begin position="163"/>
        <end position="196"/>
    </location>
</feature>
<feature type="repeat" description="TPR 4">
    <location>
        <begin position="198"/>
        <end position="231"/>
    </location>
</feature>
<feature type="repeat" description="TPR 5">
    <location>
        <begin position="235"/>
        <end position="268"/>
    </location>
</feature>
<feature type="repeat" description="TPR 6">
    <location>
        <begin position="306"/>
        <end position="339"/>
    </location>
</feature>
<feature type="repeat" description="TPR 7">
    <location>
        <begin position="341"/>
        <end position="374"/>
    </location>
</feature>
<feature type="repeat" description="TPR 8">
    <location>
        <begin position="412"/>
        <end position="444"/>
    </location>
</feature>
<feature type="repeat" description="TPR 9">
    <location>
        <begin position="451"/>
        <end position="484"/>
    </location>
</feature>
<feature type="repeat" description="TPR 10">
    <location>
        <begin position="497"/>
        <end position="530"/>
    </location>
</feature>
<feature type="repeat" description="TPR 11">
    <location>
        <begin position="531"/>
        <end position="564"/>
    </location>
</feature>
<feature type="repeat" description="TPR 12">
    <location>
        <begin position="566"/>
        <end position="598"/>
    </location>
</feature>
<feature type="repeat" description="TPR 13">
    <location>
        <begin position="613"/>
        <end position="646"/>
    </location>
</feature>
<feature type="repeat" description="TPR 14">
    <location>
        <begin position="648"/>
        <end position="680"/>
    </location>
</feature>
<feature type="repeat" description="TPR 15">
    <location>
        <begin position="681"/>
        <end position="714"/>
    </location>
</feature>
<feature type="repeat" description="TPR 16">
    <location>
        <begin position="717"/>
        <end position="750"/>
    </location>
</feature>
<feature type="region of interest" description="Disordered" evidence="3">
    <location>
        <begin position="889"/>
        <end position="1157"/>
    </location>
</feature>
<feature type="compositionally biased region" description="Basic residues" evidence="3">
    <location>
        <begin position="901"/>
        <end position="912"/>
    </location>
</feature>
<feature type="compositionally biased region" description="Acidic residues" evidence="3">
    <location>
        <begin position="917"/>
        <end position="928"/>
    </location>
</feature>
<feature type="compositionally biased region" description="Basic residues" evidence="3">
    <location>
        <begin position="958"/>
        <end position="968"/>
    </location>
</feature>
<feature type="compositionally biased region" description="Basic residues" evidence="3">
    <location>
        <begin position="983"/>
        <end position="993"/>
    </location>
</feature>
<feature type="compositionally biased region" description="Basic and acidic residues" evidence="3">
    <location>
        <begin position="1024"/>
        <end position="1044"/>
    </location>
</feature>
<feature type="compositionally biased region" description="Low complexity" evidence="3">
    <location>
        <begin position="1057"/>
        <end position="1068"/>
    </location>
</feature>
<feature type="compositionally biased region" description="Polar residues" evidence="3">
    <location>
        <begin position="1091"/>
        <end position="1109"/>
    </location>
</feature>
<feature type="compositionally biased region" description="Basic and acidic residues" evidence="3">
    <location>
        <begin position="1120"/>
        <end position="1135"/>
    </location>
</feature>
<feature type="compositionally biased region" description="Basic and acidic residues" evidence="3">
    <location>
        <begin position="1145"/>
        <end position="1157"/>
    </location>
</feature>
<feature type="sequence conflict" description="In Ref. 1; AAH77978." evidence="4" ref="1">
    <original>R</original>
    <variation>K</variation>
    <location>
        <position position="936"/>
    </location>
</feature>
<dbReference type="EMBL" id="BC077978">
    <property type="protein sequence ID" value="AAH77978.1"/>
    <property type="molecule type" value="mRNA"/>
</dbReference>
<dbReference type="EMBL" id="BC097638">
    <property type="protein sequence ID" value="AAH97638.1"/>
    <property type="molecule type" value="mRNA"/>
</dbReference>
<dbReference type="RefSeq" id="NP_001086446.1">
    <property type="nucleotide sequence ID" value="NM_001092977.1"/>
</dbReference>
<dbReference type="SMR" id="Q4QR29"/>
<dbReference type="BioGRID" id="103096">
    <property type="interactions" value="1"/>
</dbReference>
<dbReference type="IntAct" id="Q4QR29">
    <property type="interactions" value="1"/>
</dbReference>
<dbReference type="GeneID" id="446236"/>
<dbReference type="KEGG" id="xla:446236"/>
<dbReference type="AGR" id="Xenbase:XB-GENE-5946199"/>
<dbReference type="CTD" id="446236"/>
<dbReference type="Xenbase" id="XB-GENE-5946199">
    <property type="gene designation" value="ctr9.S"/>
</dbReference>
<dbReference type="OMA" id="EHWLTIA"/>
<dbReference type="OrthoDB" id="343875at2759"/>
<dbReference type="Proteomes" id="UP000186698">
    <property type="component" value="Chromosome 4S"/>
</dbReference>
<dbReference type="Bgee" id="446236">
    <property type="expression patterns" value="Expressed in neurula embryo and 19 other cell types or tissues"/>
</dbReference>
<dbReference type="GO" id="GO:0016593">
    <property type="term" value="C:Cdc73/Paf1 complex"/>
    <property type="evidence" value="ECO:0000250"/>
    <property type="project" value="UniProtKB"/>
</dbReference>
<dbReference type="GO" id="GO:0000791">
    <property type="term" value="C:euchromatin"/>
    <property type="evidence" value="ECO:0000250"/>
    <property type="project" value="UniProtKB"/>
</dbReference>
<dbReference type="GO" id="GO:0016607">
    <property type="term" value="C:nuclear speck"/>
    <property type="evidence" value="ECO:0007669"/>
    <property type="project" value="UniProtKB-SubCell"/>
</dbReference>
<dbReference type="GO" id="GO:0000993">
    <property type="term" value="F:RNA polymerase II complex binding"/>
    <property type="evidence" value="ECO:0000318"/>
    <property type="project" value="GO_Central"/>
</dbReference>
<dbReference type="GO" id="GO:0000122">
    <property type="term" value="P:negative regulation of transcription by RNA polymerase II"/>
    <property type="evidence" value="ECO:0000250"/>
    <property type="project" value="UniProtKB"/>
</dbReference>
<dbReference type="GO" id="GO:0006368">
    <property type="term" value="P:transcription elongation by RNA polymerase II"/>
    <property type="evidence" value="ECO:0000250"/>
    <property type="project" value="UniProtKB"/>
</dbReference>
<dbReference type="CDD" id="cd22249">
    <property type="entry name" value="UDM1_RNF168_RNF169-like"/>
    <property type="match status" value="1"/>
</dbReference>
<dbReference type="FunFam" id="1.25.40.10:FF:000089">
    <property type="entry name" value="CTR9 homolog, Paf1/RNA polymerase II complex component"/>
    <property type="match status" value="1"/>
</dbReference>
<dbReference type="FunFam" id="1.25.40.10:FF:000162">
    <property type="entry name" value="CTR9 homolog, Paf1/RNA polymerase II complex component"/>
    <property type="match status" value="1"/>
</dbReference>
<dbReference type="FunFam" id="1.25.40.10:FF:001026">
    <property type="entry name" value="CTR9 homolog, Paf1/RNA polymerase II complex component"/>
    <property type="match status" value="1"/>
</dbReference>
<dbReference type="Gene3D" id="1.25.40.10">
    <property type="entry name" value="Tetratricopeptide repeat domain"/>
    <property type="match status" value="3"/>
</dbReference>
<dbReference type="InterPro" id="IPR031101">
    <property type="entry name" value="Ctr9"/>
</dbReference>
<dbReference type="InterPro" id="IPR011990">
    <property type="entry name" value="TPR-like_helical_dom_sf"/>
</dbReference>
<dbReference type="InterPro" id="IPR019734">
    <property type="entry name" value="TPR_rpt"/>
</dbReference>
<dbReference type="PANTHER" id="PTHR14027">
    <property type="entry name" value="RNA POLYMERASE-ASSOCIATED PROTEIN CTR9"/>
    <property type="match status" value="1"/>
</dbReference>
<dbReference type="PANTHER" id="PTHR14027:SF2">
    <property type="entry name" value="RNA POLYMERASE-ASSOCIATED PROTEIN CTR9 HOMOLOG"/>
    <property type="match status" value="1"/>
</dbReference>
<dbReference type="Pfam" id="PF13374">
    <property type="entry name" value="TPR_10"/>
    <property type="match status" value="1"/>
</dbReference>
<dbReference type="Pfam" id="PF13432">
    <property type="entry name" value="TPR_16"/>
    <property type="match status" value="1"/>
</dbReference>
<dbReference type="Pfam" id="PF14559">
    <property type="entry name" value="TPR_19"/>
    <property type="match status" value="2"/>
</dbReference>
<dbReference type="Pfam" id="PF13181">
    <property type="entry name" value="TPR_8"/>
    <property type="match status" value="1"/>
</dbReference>
<dbReference type="SMART" id="SM00028">
    <property type="entry name" value="TPR"/>
    <property type="match status" value="11"/>
</dbReference>
<dbReference type="SUPFAM" id="SSF81901">
    <property type="entry name" value="HCP-like"/>
    <property type="match status" value="1"/>
</dbReference>
<dbReference type="SUPFAM" id="SSF48452">
    <property type="entry name" value="TPR-like"/>
    <property type="match status" value="3"/>
</dbReference>
<dbReference type="PROSITE" id="PS50005">
    <property type="entry name" value="TPR"/>
    <property type="match status" value="10"/>
</dbReference>
<dbReference type="PROSITE" id="PS50293">
    <property type="entry name" value="TPR_REGION"/>
    <property type="match status" value="1"/>
</dbReference>
<proteinExistence type="evidence at transcript level"/>
<organism>
    <name type="scientific">Xenopus laevis</name>
    <name type="common">African clawed frog</name>
    <dbReference type="NCBI Taxonomy" id="8355"/>
    <lineage>
        <taxon>Eukaryota</taxon>
        <taxon>Metazoa</taxon>
        <taxon>Chordata</taxon>
        <taxon>Craniata</taxon>
        <taxon>Vertebrata</taxon>
        <taxon>Euteleostomi</taxon>
        <taxon>Amphibia</taxon>
        <taxon>Batrachia</taxon>
        <taxon>Anura</taxon>
        <taxon>Pipoidea</taxon>
        <taxon>Pipidae</taxon>
        <taxon>Xenopodinae</taxon>
        <taxon>Xenopus</taxon>
        <taxon>Xenopus</taxon>
    </lineage>
</organism>
<accession>Q4QR29</accession>
<accession>Q6DCM7</accession>